<dbReference type="EMBL" id="BC098031">
    <property type="protein sequence ID" value="AAH98031.1"/>
    <property type="molecule type" value="mRNA"/>
</dbReference>
<dbReference type="RefSeq" id="NP_001020572.1">
    <property type="nucleotide sequence ID" value="NM_001025401.1"/>
</dbReference>
<dbReference type="SMR" id="Q4QQS8"/>
<dbReference type="CORUM" id="Q4QQS8"/>
<dbReference type="FunCoup" id="Q4QQS8">
    <property type="interactions" value="4258"/>
</dbReference>
<dbReference type="STRING" id="10116.ENSRNOP00000005035"/>
<dbReference type="iPTMnet" id="Q4QQS8"/>
<dbReference type="PhosphoSitePlus" id="Q4QQS8"/>
<dbReference type="jPOST" id="Q4QQS8"/>
<dbReference type="PaxDb" id="10116-ENSRNOP00000005035"/>
<dbReference type="Ensembl" id="ENSRNOT00000005035.8">
    <property type="protein sequence ID" value="ENSRNOP00000005035.5"/>
    <property type="gene ID" value="ENSRNOG00000003673.8"/>
</dbReference>
<dbReference type="GeneID" id="287830"/>
<dbReference type="KEGG" id="rno:287830"/>
<dbReference type="AGR" id="RGD:1311942"/>
<dbReference type="CTD" id="79902"/>
<dbReference type="RGD" id="1311942">
    <property type="gene designation" value="Nup85"/>
</dbReference>
<dbReference type="eggNOG" id="KOG2271">
    <property type="taxonomic scope" value="Eukaryota"/>
</dbReference>
<dbReference type="GeneTree" id="ENSGT00390000000204"/>
<dbReference type="HOGENOM" id="CLU_027342_0_0_1"/>
<dbReference type="InParanoid" id="Q4QQS8"/>
<dbReference type="OMA" id="ELMEWLN"/>
<dbReference type="OrthoDB" id="17447at9989"/>
<dbReference type="PhylomeDB" id="Q4QQS8"/>
<dbReference type="TreeFam" id="TF323240"/>
<dbReference type="Reactome" id="R-RNO-141444">
    <property type="pathway name" value="Amplification of signal from unattached kinetochores via a MAD2 inhibitory signal"/>
</dbReference>
<dbReference type="Reactome" id="R-RNO-159227">
    <property type="pathway name" value="Transport of the SLBP independent Mature mRNA"/>
</dbReference>
<dbReference type="Reactome" id="R-RNO-159230">
    <property type="pathway name" value="Transport of the SLBP Dependant Mature mRNA"/>
</dbReference>
<dbReference type="Reactome" id="R-RNO-159231">
    <property type="pathway name" value="Transport of Mature mRNA Derived from an Intronless Transcript"/>
</dbReference>
<dbReference type="Reactome" id="R-RNO-159236">
    <property type="pathway name" value="Transport of Mature mRNA derived from an Intron-Containing Transcript"/>
</dbReference>
<dbReference type="Reactome" id="R-RNO-170822">
    <property type="pathway name" value="Regulation of Glucokinase by Glucokinase Regulatory Protein"/>
</dbReference>
<dbReference type="Reactome" id="R-RNO-191859">
    <property type="pathway name" value="snRNP Assembly"/>
</dbReference>
<dbReference type="Reactome" id="R-RNO-2467813">
    <property type="pathway name" value="Separation of Sister Chromatids"/>
</dbReference>
<dbReference type="Reactome" id="R-RNO-2500257">
    <property type="pathway name" value="Resolution of Sister Chromatid Cohesion"/>
</dbReference>
<dbReference type="Reactome" id="R-RNO-3108214">
    <property type="pathway name" value="SUMOylation of DNA damage response and repair proteins"/>
</dbReference>
<dbReference type="Reactome" id="R-RNO-3232142">
    <property type="pathway name" value="SUMOylation of ubiquitinylation proteins"/>
</dbReference>
<dbReference type="Reactome" id="R-RNO-3301854">
    <property type="pathway name" value="Nuclear Pore Complex (NPC) Disassembly"/>
</dbReference>
<dbReference type="Reactome" id="R-RNO-3371453">
    <property type="pathway name" value="Regulation of HSF1-mediated heat shock response"/>
</dbReference>
<dbReference type="Reactome" id="R-RNO-4085377">
    <property type="pathway name" value="SUMOylation of SUMOylation proteins"/>
</dbReference>
<dbReference type="Reactome" id="R-RNO-4551638">
    <property type="pathway name" value="SUMOylation of chromatin organization proteins"/>
</dbReference>
<dbReference type="Reactome" id="R-RNO-4570464">
    <property type="pathway name" value="SUMOylation of RNA binding proteins"/>
</dbReference>
<dbReference type="Reactome" id="R-RNO-4615885">
    <property type="pathway name" value="SUMOylation of DNA replication proteins"/>
</dbReference>
<dbReference type="Reactome" id="R-RNO-5578749">
    <property type="pathway name" value="Transcriptional regulation by small RNAs"/>
</dbReference>
<dbReference type="Reactome" id="R-RNO-5663220">
    <property type="pathway name" value="RHO GTPases Activate Formins"/>
</dbReference>
<dbReference type="Reactome" id="R-RNO-68877">
    <property type="pathway name" value="Mitotic Prometaphase"/>
</dbReference>
<dbReference type="Reactome" id="R-RNO-9615933">
    <property type="pathway name" value="Postmitotic nuclear pore complex (NPC) reformation"/>
</dbReference>
<dbReference type="Reactome" id="R-RNO-9648025">
    <property type="pathway name" value="EML4 and NUDC in mitotic spindle formation"/>
</dbReference>
<dbReference type="PRO" id="PR:Q4QQS8"/>
<dbReference type="Proteomes" id="UP000002494">
    <property type="component" value="Chromosome 10"/>
</dbReference>
<dbReference type="Bgee" id="ENSRNOG00000003673">
    <property type="expression patterns" value="Expressed in thymus and 20 other cell types or tissues"/>
</dbReference>
<dbReference type="GO" id="GO:0005737">
    <property type="term" value="C:cytoplasm"/>
    <property type="evidence" value="ECO:0007669"/>
    <property type="project" value="UniProtKB-SubCell"/>
</dbReference>
<dbReference type="GO" id="GO:0000776">
    <property type="term" value="C:kinetochore"/>
    <property type="evidence" value="ECO:0000266"/>
    <property type="project" value="RGD"/>
</dbReference>
<dbReference type="GO" id="GO:0005635">
    <property type="term" value="C:nuclear envelope"/>
    <property type="evidence" value="ECO:0000266"/>
    <property type="project" value="RGD"/>
</dbReference>
<dbReference type="GO" id="GO:0031965">
    <property type="term" value="C:nuclear membrane"/>
    <property type="evidence" value="ECO:0007669"/>
    <property type="project" value="UniProtKB-SubCell"/>
</dbReference>
<dbReference type="GO" id="GO:0031080">
    <property type="term" value="C:nuclear pore outer ring"/>
    <property type="evidence" value="ECO:0000250"/>
    <property type="project" value="UniProtKB"/>
</dbReference>
<dbReference type="GO" id="GO:0005819">
    <property type="term" value="C:spindle"/>
    <property type="evidence" value="ECO:0007669"/>
    <property type="project" value="UniProtKB-SubCell"/>
</dbReference>
<dbReference type="GO" id="GO:0017056">
    <property type="term" value="F:structural constituent of nuclear pore"/>
    <property type="evidence" value="ECO:0000318"/>
    <property type="project" value="GO_Central"/>
</dbReference>
<dbReference type="GO" id="GO:0006935">
    <property type="term" value="P:chemotaxis"/>
    <property type="evidence" value="ECO:0000266"/>
    <property type="project" value="RGD"/>
</dbReference>
<dbReference type="GO" id="GO:0030032">
    <property type="term" value="P:lamellipodium assembly"/>
    <property type="evidence" value="ECO:0000266"/>
    <property type="project" value="RGD"/>
</dbReference>
<dbReference type="GO" id="GO:0048246">
    <property type="term" value="P:macrophage chemotaxis"/>
    <property type="evidence" value="ECO:0000266"/>
    <property type="project" value="RGD"/>
</dbReference>
<dbReference type="GO" id="GO:0006406">
    <property type="term" value="P:mRNA export from nucleus"/>
    <property type="evidence" value="ECO:0000318"/>
    <property type="project" value="GO_Central"/>
</dbReference>
<dbReference type="GO" id="GO:0072006">
    <property type="term" value="P:nephron development"/>
    <property type="evidence" value="ECO:0000250"/>
    <property type="project" value="UniProtKB"/>
</dbReference>
<dbReference type="GO" id="GO:0045893">
    <property type="term" value="P:positive regulation of DNA-templated transcription"/>
    <property type="evidence" value="ECO:0000318"/>
    <property type="project" value="GO_Central"/>
</dbReference>
<dbReference type="GO" id="GO:0006606">
    <property type="term" value="P:protein import into nucleus"/>
    <property type="evidence" value="ECO:0000318"/>
    <property type="project" value="GO_Central"/>
</dbReference>
<dbReference type="InterPro" id="IPR011502">
    <property type="entry name" value="Nucleoporin_Nup85"/>
</dbReference>
<dbReference type="PANTHER" id="PTHR13373">
    <property type="entry name" value="FROUNT PROTEIN-RELATED"/>
    <property type="match status" value="1"/>
</dbReference>
<dbReference type="PANTHER" id="PTHR13373:SF21">
    <property type="entry name" value="NUCLEAR PORE COMPLEX PROTEIN NUP85"/>
    <property type="match status" value="1"/>
</dbReference>
<dbReference type="Pfam" id="PF07575">
    <property type="entry name" value="Nucleopor_Nup85"/>
    <property type="match status" value="1"/>
</dbReference>
<sequence>MEELDCEPAVTWIPGVNSKKKQMCFDWGPGEMLLCETSFNKTDKSEKVPSCPFIYIIRKDVDVYSQILRKLFNESHGIFVGLQRLEEELSGKSRKAQLVRVSKNYRSVIRACMEEMHQVAIAAKDPASGRQFSSQVSILSAMELIWNLCEILFIEVAPAGPLLLHLLDWVRLHVCEVDSLSADVLGSDHPSKHESFWNLVTVLVLQGRLDEARQMLSKEADASPSSAGMCRVLGDLMRTMPILSPGNTQTLTELELKWQHWREECERHLQDNTFAANPHLESLCKIMLGDEATLLEQKELMSNWYHFLVTRLLYSNPTVKPTDLHLYAQSSLDMFLGGESSPEPLDNILMAAFEFDIHQVIKECSIALSNWWFVAHLTDLLDHCRLLQSHNLYFGSNMREFLLLEYASGLFAHHSLWQLGVDYFDYCPELGRVSLELHIERIPLNTEQKALKVLRICEQRQMTEQVGSICKILAMKAVRNNRLGSALSWSIRAKDAAFATLVSDRFLRDYCERGCFSDLDLIDNLGPAMMLSDRLTFLGKYREFHRLYGEKRFGDAASLLLSLMTSQIAPRSFWMTLLTDALPLLEQKQVIFSAEQTYELMRCLEDLASRRPECGEPDAQRLQDDDIETTKVEMLRLALARNLARAIIREGSLEGS</sequence>
<protein>
    <recommendedName>
        <fullName>Nuclear pore complex protein Nup85</fullName>
    </recommendedName>
    <alternativeName>
        <fullName>85 kDa nucleoporin</fullName>
    </alternativeName>
    <alternativeName>
        <fullName>Nucleoporin Nup85</fullName>
    </alternativeName>
    <alternativeName>
        <fullName>Pericentrin-1</fullName>
    </alternativeName>
</protein>
<organism>
    <name type="scientific">Rattus norvegicus</name>
    <name type="common">Rat</name>
    <dbReference type="NCBI Taxonomy" id="10116"/>
    <lineage>
        <taxon>Eukaryota</taxon>
        <taxon>Metazoa</taxon>
        <taxon>Chordata</taxon>
        <taxon>Craniata</taxon>
        <taxon>Vertebrata</taxon>
        <taxon>Euteleostomi</taxon>
        <taxon>Mammalia</taxon>
        <taxon>Eutheria</taxon>
        <taxon>Euarchontoglires</taxon>
        <taxon>Glires</taxon>
        <taxon>Rodentia</taxon>
        <taxon>Myomorpha</taxon>
        <taxon>Muroidea</taxon>
        <taxon>Muridae</taxon>
        <taxon>Murinae</taxon>
        <taxon>Rattus</taxon>
    </lineage>
</organism>
<comment type="function">
    <text evidence="2">Essential component of the nuclear pore complex (NPC) that seems to be required for NPC assembly and maintenance. As part of the NPC Nup107-160 subcomplex plays a role in RNA export and in tethering NUP96/Nup98 and NUP153 to the nucleus. The Nup107-160 complex seems to be required for spindle assembly during mitosis. NUP85 is required for membrane clustering of CCL2-activated CCR2. Seems to be involved in CCR2-mediated chemotaxis of monocytes and may link activated CCR2 to the phosphatidyl-inositol 3-kinase-Rac-lammellipodium protrusion cascade. Involved in nephrogenesis.</text>
</comment>
<comment type="subunit">
    <text evidence="2">Component of the nuclear pore complex (NPC). Component of the NPC Nup107-160 subcomplex, consisting of at least NUP107, NUP98/Nup96, NUP160, NUP133, NUP85, NUP37, NUP43 and SEC13. Interacts with NUP160, NUP133 and SEC13. Interacts with NUP37, NUP107 and NUP43. Interacts with CCR2.</text>
</comment>
<comment type="subcellular location">
    <subcellularLocation>
        <location evidence="2">Nucleus</location>
        <location evidence="2">Nuclear pore complex</location>
    </subcellularLocation>
    <subcellularLocation>
        <location evidence="2">Chromosome</location>
        <location evidence="2">Centromere</location>
        <location evidence="2">Kinetochore</location>
    </subcellularLocation>
    <subcellularLocation>
        <location evidence="2">Cytoplasm</location>
        <location evidence="2">Cytoskeleton</location>
        <location evidence="2">Spindle</location>
    </subcellularLocation>
    <subcellularLocation>
        <location evidence="2">Cytoplasm</location>
    </subcellularLocation>
    <subcellularLocation>
        <location evidence="2">Nucleus membrane</location>
    </subcellularLocation>
    <text evidence="2">During mitosis, localizes to the kinetochores and spindle poles. Upon CCl2 stimulation translocates from the cytoplasm to the membrane and colocalizes with CCR2 at the front of migrating cells.</text>
</comment>
<comment type="similarity">
    <text evidence="3">Belongs to the nucleoporin Nup85 family.</text>
</comment>
<accession>Q4QQS8</accession>
<gene>
    <name type="primary">Nup85</name>
    <name type="synonym">Pcnt1</name>
</gene>
<reference key="1">
    <citation type="journal article" date="2004" name="Genome Res.">
        <title>The status, quality, and expansion of the NIH full-length cDNA project: the Mammalian Gene Collection (MGC).</title>
        <authorList>
            <consortium name="The MGC Project Team"/>
        </authorList>
    </citation>
    <scope>NUCLEOTIDE SEQUENCE [LARGE SCALE MRNA]</scope>
    <source>
        <tissue>Testis</tissue>
    </source>
</reference>
<feature type="chain" id="PRO_0000324189" description="Nuclear pore complex protein Nup85">
    <location>
        <begin position="1"/>
        <end position="656"/>
    </location>
</feature>
<feature type="modified residue" description="N-acetylmethionine" evidence="2">
    <location>
        <position position="1"/>
    </location>
</feature>
<feature type="modified residue" description="N6-acetyllysine" evidence="1">
    <location>
        <position position="92"/>
    </location>
</feature>
<feature type="modified residue" description="Phosphoserine" evidence="2">
    <location>
        <position position="223"/>
    </location>
</feature>
<keyword id="KW-0007">Acetylation</keyword>
<keyword id="KW-0137">Centromere</keyword>
<keyword id="KW-0158">Chromosome</keyword>
<keyword id="KW-0963">Cytoplasm</keyword>
<keyword id="KW-0206">Cytoskeleton</keyword>
<keyword id="KW-0995">Kinetochore</keyword>
<keyword id="KW-0472">Membrane</keyword>
<keyword id="KW-0509">mRNA transport</keyword>
<keyword id="KW-0906">Nuclear pore complex</keyword>
<keyword id="KW-0539">Nucleus</keyword>
<keyword id="KW-0597">Phosphoprotein</keyword>
<keyword id="KW-0653">Protein transport</keyword>
<keyword id="KW-1185">Reference proteome</keyword>
<keyword id="KW-0811">Translocation</keyword>
<keyword id="KW-0813">Transport</keyword>
<proteinExistence type="evidence at transcript level"/>
<name>NUP85_RAT</name>
<evidence type="ECO:0000250" key="1">
    <source>
        <dbReference type="UniProtKB" id="Q8R480"/>
    </source>
</evidence>
<evidence type="ECO:0000250" key="2">
    <source>
        <dbReference type="UniProtKB" id="Q9BW27"/>
    </source>
</evidence>
<evidence type="ECO:0000305" key="3"/>